<accession>A0Q7Y1</accession>
<evidence type="ECO:0000255" key="1">
    <source>
        <dbReference type="HAMAP-Rule" id="MF_00406"/>
    </source>
</evidence>
<name>FABZ_FRATN</name>
<comment type="function">
    <text evidence="1">Involved in unsaturated fatty acids biosynthesis. Catalyzes the dehydration of short chain beta-hydroxyacyl-ACPs and long chain saturated and unsaturated beta-hydroxyacyl-ACPs.</text>
</comment>
<comment type="catalytic activity">
    <reaction evidence="1">
        <text>a (3R)-hydroxyacyl-[ACP] = a (2E)-enoyl-[ACP] + H2O</text>
        <dbReference type="Rhea" id="RHEA:13097"/>
        <dbReference type="Rhea" id="RHEA-COMP:9925"/>
        <dbReference type="Rhea" id="RHEA-COMP:9945"/>
        <dbReference type="ChEBI" id="CHEBI:15377"/>
        <dbReference type="ChEBI" id="CHEBI:78784"/>
        <dbReference type="ChEBI" id="CHEBI:78827"/>
        <dbReference type="EC" id="4.2.1.59"/>
    </reaction>
</comment>
<comment type="subcellular location">
    <subcellularLocation>
        <location evidence="1">Cytoplasm</location>
    </subcellularLocation>
</comment>
<comment type="similarity">
    <text evidence="1">Belongs to the thioester dehydratase family. FabZ subfamily.</text>
</comment>
<organism>
    <name type="scientific">Francisella tularensis subsp. novicida (strain U112)</name>
    <dbReference type="NCBI Taxonomy" id="401614"/>
    <lineage>
        <taxon>Bacteria</taxon>
        <taxon>Pseudomonadati</taxon>
        <taxon>Pseudomonadota</taxon>
        <taxon>Gammaproteobacteria</taxon>
        <taxon>Thiotrichales</taxon>
        <taxon>Francisellaceae</taxon>
        <taxon>Francisella</taxon>
    </lineage>
</organism>
<gene>
    <name evidence="1" type="primary">fabZ</name>
    <name type="ordered locus">FTN_1479</name>
</gene>
<protein>
    <recommendedName>
        <fullName evidence="1">3-hydroxyacyl-[acyl-carrier-protein] dehydratase FabZ</fullName>
        <ecNumber evidence="1">4.2.1.59</ecNumber>
    </recommendedName>
    <alternativeName>
        <fullName evidence="1">(3R)-hydroxymyristoyl-[acyl-carrier-protein] dehydratase</fullName>
        <shortName evidence="1">(3R)-hydroxymyristoyl-ACP dehydrase</shortName>
    </alternativeName>
    <alternativeName>
        <fullName evidence="1">Beta-hydroxyacyl-ACP dehydratase</fullName>
    </alternativeName>
</protein>
<feature type="chain" id="PRO_0000301894" description="3-hydroxyacyl-[acyl-carrier-protein] dehydratase FabZ">
    <location>
        <begin position="1"/>
        <end position="163"/>
    </location>
</feature>
<feature type="active site" evidence="1">
    <location>
        <position position="58"/>
    </location>
</feature>
<keyword id="KW-0963">Cytoplasm</keyword>
<keyword id="KW-0441">Lipid A biosynthesis</keyword>
<keyword id="KW-0444">Lipid biosynthesis</keyword>
<keyword id="KW-0443">Lipid metabolism</keyword>
<keyword id="KW-0456">Lyase</keyword>
<dbReference type="EC" id="4.2.1.59" evidence="1"/>
<dbReference type="EMBL" id="CP000439">
    <property type="protein sequence ID" value="ABK90346.1"/>
    <property type="molecule type" value="Genomic_DNA"/>
</dbReference>
<dbReference type="RefSeq" id="WP_003014877.1">
    <property type="nucleotide sequence ID" value="NZ_CP009633.1"/>
</dbReference>
<dbReference type="SMR" id="A0Q7Y1"/>
<dbReference type="GeneID" id="75264783"/>
<dbReference type="KEGG" id="ftn:FTN_1479"/>
<dbReference type="KEGG" id="ftx:AW25_522"/>
<dbReference type="BioCyc" id="FTUL401614:G1G75-1527-MONOMER"/>
<dbReference type="Proteomes" id="UP000000762">
    <property type="component" value="Chromosome"/>
</dbReference>
<dbReference type="GO" id="GO:0005737">
    <property type="term" value="C:cytoplasm"/>
    <property type="evidence" value="ECO:0007669"/>
    <property type="project" value="UniProtKB-SubCell"/>
</dbReference>
<dbReference type="GO" id="GO:0016020">
    <property type="term" value="C:membrane"/>
    <property type="evidence" value="ECO:0007669"/>
    <property type="project" value="GOC"/>
</dbReference>
<dbReference type="GO" id="GO:0019171">
    <property type="term" value="F:(3R)-hydroxyacyl-[acyl-carrier-protein] dehydratase activity"/>
    <property type="evidence" value="ECO:0007669"/>
    <property type="project" value="UniProtKB-EC"/>
</dbReference>
<dbReference type="GO" id="GO:0006633">
    <property type="term" value="P:fatty acid biosynthetic process"/>
    <property type="evidence" value="ECO:0007669"/>
    <property type="project" value="UniProtKB-UniRule"/>
</dbReference>
<dbReference type="GO" id="GO:0009245">
    <property type="term" value="P:lipid A biosynthetic process"/>
    <property type="evidence" value="ECO:0007669"/>
    <property type="project" value="UniProtKB-UniRule"/>
</dbReference>
<dbReference type="CDD" id="cd01288">
    <property type="entry name" value="FabZ"/>
    <property type="match status" value="1"/>
</dbReference>
<dbReference type="FunFam" id="3.10.129.10:FF:000001">
    <property type="entry name" value="3-hydroxyacyl-[acyl-carrier-protein] dehydratase FabZ"/>
    <property type="match status" value="1"/>
</dbReference>
<dbReference type="Gene3D" id="3.10.129.10">
    <property type="entry name" value="Hotdog Thioesterase"/>
    <property type="match status" value="1"/>
</dbReference>
<dbReference type="HAMAP" id="MF_00406">
    <property type="entry name" value="FabZ"/>
    <property type="match status" value="1"/>
</dbReference>
<dbReference type="InterPro" id="IPR013114">
    <property type="entry name" value="FabA_FabZ"/>
</dbReference>
<dbReference type="InterPro" id="IPR010084">
    <property type="entry name" value="FabZ"/>
</dbReference>
<dbReference type="InterPro" id="IPR029069">
    <property type="entry name" value="HotDog_dom_sf"/>
</dbReference>
<dbReference type="NCBIfam" id="TIGR01750">
    <property type="entry name" value="fabZ"/>
    <property type="match status" value="1"/>
</dbReference>
<dbReference type="NCBIfam" id="NF000582">
    <property type="entry name" value="PRK00006.1"/>
    <property type="match status" value="1"/>
</dbReference>
<dbReference type="PANTHER" id="PTHR30272">
    <property type="entry name" value="3-HYDROXYACYL-[ACYL-CARRIER-PROTEIN] DEHYDRATASE"/>
    <property type="match status" value="1"/>
</dbReference>
<dbReference type="PANTHER" id="PTHR30272:SF1">
    <property type="entry name" value="3-HYDROXYACYL-[ACYL-CARRIER-PROTEIN] DEHYDRATASE"/>
    <property type="match status" value="1"/>
</dbReference>
<dbReference type="Pfam" id="PF07977">
    <property type="entry name" value="FabA"/>
    <property type="match status" value="1"/>
</dbReference>
<dbReference type="SUPFAM" id="SSF54637">
    <property type="entry name" value="Thioesterase/thiol ester dehydrase-isomerase"/>
    <property type="match status" value="1"/>
</dbReference>
<proteinExistence type="inferred from homology"/>
<sequence>MSQFNQNNKQIDVMGIRKILPHRYPFALLDKIVDWSVEDRTIVAQKNVTINEDFFNGHFPDFPVMPGVLIVEAMAQATAILGELMAETLFAHVVEKAGGGRRTFMLAGIDKVRVKRPVVPGDVLVIESRMVKQKNIICTAESVAKVDGQIVCSAELMAAYKDY</sequence>
<reference key="1">
    <citation type="journal article" date="2007" name="Genome Biol.">
        <title>Comparison of Francisella tularensis genomes reveals evolutionary events associated with the emergence of human pathogenic strains.</title>
        <authorList>
            <person name="Rohmer L."/>
            <person name="Fong C."/>
            <person name="Abmayr S."/>
            <person name="Wasnick M."/>
            <person name="Larson Freeman T.J."/>
            <person name="Radey M."/>
            <person name="Guina T."/>
            <person name="Svensson K."/>
            <person name="Hayden H.S."/>
            <person name="Jacobs M."/>
            <person name="Gallagher L.A."/>
            <person name="Manoil C."/>
            <person name="Ernst R.K."/>
            <person name="Drees B."/>
            <person name="Buckley D."/>
            <person name="Haugen E."/>
            <person name="Bovee D."/>
            <person name="Zhou Y."/>
            <person name="Chang J."/>
            <person name="Levy R."/>
            <person name="Lim R."/>
            <person name="Gillett W."/>
            <person name="Guenthener D."/>
            <person name="Kang A."/>
            <person name="Shaffer S.A."/>
            <person name="Taylor G."/>
            <person name="Chen J."/>
            <person name="Gallis B."/>
            <person name="D'Argenio D.A."/>
            <person name="Forsman M."/>
            <person name="Olson M.V."/>
            <person name="Goodlett D.R."/>
            <person name="Kaul R."/>
            <person name="Miller S.I."/>
            <person name="Brittnacher M.J."/>
        </authorList>
    </citation>
    <scope>NUCLEOTIDE SEQUENCE [LARGE SCALE GENOMIC DNA]</scope>
    <source>
        <strain>U112</strain>
    </source>
</reference>